<feature type="chain" id="PRO_1000009420" description="Leucine--tRNA ligase">
    <location>
        <begin position="1"/>
        <end position="816"/>
    </location>
</feature>
<feature type="short sequence motif" description="'HIGH' region">
    <location>
        <begin position="42"/>
        <end position="52"/>
    </location>
</feature>
<feature type="short sequence motif" description="'KMSKS' region">
    <location>
        <begin position="574"/>
        <end position="578"/>
    </location>
</feature>
<feature type="binding site" evidence="1">
    <location>
        <position position="577"/>
    </location>
    <ligand>
        <name>ATP</name>
        <dbReference type="ChEBI" id="CHEBI:30616"/>
    </ligand>
</feature>
<sequence length="816" mass="93408">MNSEYNAQKIEAQAQKYWQENKSFEVSEDTSKEKYYCLSMFPYPSGSLHMGHVRNYSIGDVISRYQKMQGKNVMQPIGWDGFGLPAENAALENKVSPAKWTYENIDYMRDQLSKLGFGYDWSREIATCHQKYYRWEQWLFIKLFEKDLVYKKNAIVNWDPVDQTVLANEQVIDGRGWRSNALIEKKKISQWFMRITNYADELIYGLDKLDGWPDAVKTMQKNWIGKSVGLEVDFPRHNADSIKVYTTRPDTLMGVTYLVISSEHPIALEAGKNNPQVQAFIDECKTIQITKETMKTIDKKGIDLGVKCIHPITSDDVPIWIANFVLIGYGTGAVMSVPAHDKRDYEFAKKYGIAIKKVINENISIDKNAMTDKGVLFNSGEFNGLNFDQAFNEIAKTLTDKNLGRKKTNYRLQDWGISRQRYWGCPIPIINCQNCGIVVVPEADLPVVLPEVMSFDSVGSLIKKMPEFYQTTCPKCGKMAQQETDTLDTFFESSWYFARYTCKDNNDKMLDKRANYWLANGGVDQYIGGIEHAILHLLYARFFNKLLRDEGFIKNDEPFKNLLTQGMVLKDGAKMSKSKGNTVDPAQMIEKYGADTVRLFILFAAPPTQNLEWSDSGLEGVHRFINKVYRLIMDFIQDHKSHAIGTLNNFDKAQKDIRLKTHQTLSKITDNMSRRYLFNTVIAALMKLCNTLSKFNDTSKTSMAIRQESIHILLKTLSPIAPHLCHYLWKKLGNIKAIINEPWPNVDKSALVQDKMQIIVQVNGKLRTKLMFSTDVDNAQIEAQTLANENITKFTKGKIIVKVIIVPNKLVNIVVK</sequence>
<accession>A1AV52</accession>
<protein>
    <recommendedName>
        <fullName evidence="1">Leucine--tRNA ligase</fullName>
        <ecNumber evidence="1">6.1.1.4</ecNumber>
    </recommendedName>
    <alternativeName>
        <fullName evidence="1">Leucyl-tRNA synthetase</fullName>
        <shortName evidence="1">LeuRS</shortName>
    </alternativeName>
</protein>
<reference key="1">
    <citation type="journal article" date="2007" name="Science">
        <title>The Calyptogena magnifica chemoautotrophic symbiont genome.</title>
        <authorList>
            <person name="Newton I.L.G."/>
            <person name="Woyke T."/>
            <person name="Auchtung T.A."/>
            <person name="Dilly G.F."/>
            <person name="Dutton R.J."/>
            <person name="Fisher M.C."/>
            <person name="Fontanez K.M."/>
            <person name="Lau E."/>
            <person name="Stewart F.J."/>
            <person name="Richardson P.M."/>
            <person name="Barry K.W."/>
            <person name="Saunders E."/>
            <person name="Detter J.C."/>
            <person name="Wu D."/>
            <person name="Eisen J.A."/>
            <person name="Cavanaugh C.M."/>
        </authorList>
    </citation>
    <scope>NUCLEOTIDE SEQUENCE [LARGE SCALE GENOMIC DNA]</scope>
</reference>
<dbReference type="EC" id="6.1.1.4" evidence="1"/>
<dbReference type="EMBL" id="CP000488">
    <property type="protein sequence ID" value="ABL01809.1"/>
    <property type="molecule type" value="Genomic_DNA"/>
</dbReference>
<dbReference type="RefSeq" id="WP_011737435.1">
    <property type="nucleotide sequence ID" value="NC_008610.1"/>
</dbReference>
<dbReference type="SMR" id="A1AV52"/>
<dbReference type="STRING" id="413404.Rmag_0005"/>
<dbReference type="KEGG" id="rma:Rmag_0005"/>
<dbReference type="eggNOG" id="COG0495">
    <property type="taxonomic scope" value="Bacteria"/>
</dbReference>
<dbReference type="HOGENOM" id="CLU_004427_0_0_6"/>
<dbReference type="OrthoDB" id="9810365at2"/>
<dbReference type="Proteomes" id="UP000002587">
    <property type="component" value="Chromosome"/>
</dbReference>
<dbReference type="GO" id="GO:0005829">
    <property type="term" value="C:cytosol"/>
    <property type="evidence" value="ECO:0007669"/>
    <property type="project" value="TreeGrafter"/>
</dbReference>
<dbReference type="GO" id="GO:0002161">
    <property type="term" value="F:aminoacyl-tRNA deacylase activity"/>
    <property type="evidence" value="ECO:0007669"/>
    <property type="project" value="InterPro"/>
</dbReference>
<dbReference type="GO" id="GO:0005524">
    <property type="term" value="F:ATP binding"/>
    <property type="evidence" value="ECO:0007669"/>
    <property type="project" value="UniProtKB-UniRule"/>
</dbReference>
<dbReference type="GO" id="GO:0004823">
    <property type="term" value="F:leucine-tRNA ligase activity"/>
    <property type="evidence" value="ECO:0007669"/>
    <property type="project" value="UniProtKB-UniRule"/>
</dbReference>
<dbReference type="GO" id="GO:0006429">
    <property type="term" value="P:leucyl-tRNA aminoacylation"/>
    <property type="evidence" value="ECO:0007669"/>
    <property type="project" value="UniProtKB-UniRule"/>
</dbReference>
<dbReference type="CDD" id="cd07958">
    <property type="entry name" value="Anticodon_Ia_Leu_BEm"/>
    <property type="match status" value="1"/>
</dbReference>
<dbReference type="CDD" id="cd00812">
    <property type="entry name" value="LeuRS_core"/>
    <property type="match status" value="1"/>
</dbReference>
<dbReference type="FunFam" id="1.10.730.10:FF:000003">
    <property type="entry name" value="Leucine--tRNA ligase"/>
    <property type="match status" value="1"/>
</dbReference>
<dbReference type="FunFam" id="3.40.50.620:FF:000003">
    <property type="entry name" value="Leucine--tRNA ligase"/>
    <property type="match status" value="1"/>
</dbReference>
<dbReference type="FunFam" id="3.90.740.10:FF:000012">
    <property type="entry name" value="Leucine--tRNA ligase"/>
    <property type="match status" value="1"/>
</dbReference>
<dbReference type="Gene3D" id="3.10.20.590">
    <property type="match status" value="1"/>
</dbReference>
<dbReference type="Gene3D" id="3.40.50.620">
    <property type="entry name" value="HUPs"/>
    <property type="match status" value="2"/>
</dbReference>
<dbReference type="Gene3D" id="1.10.730.10">
    <property type="entry name" value="Isoleucyl-tRNA Synthetase, Domain 1"/>
    <property type="match status" value="1"/>
</dbReference>
<dbReference type="HAMAP" id="MF_00049_B">
    <property type="entry name" value="Leu_tRNA_synth_B"/>
    <property type="match status" value="1"/>
</dbReference>
<dbReference type="InterPro" id="IPR001412">
    <property type="entry name" value="aa-tRNA-synth_I_CS"/>
</dbReference>
<dbReference type="InterPro" id="IPR002300">
    <property type="entry name" value="aa-tRNA-synth_Ia"/>
</dbReference>
<dbReference type="InterPro" id="IPR002302">
    <property type="entry name" value="Leu-tRNA-ligase"/>
</dbReference>
<dbReference type="InterPro" id="IPR025709">
    <property type="entry name" value="Leu_tRNA-synth_edit"/>
</dbReference>
<dbReference type="InterPro" id="IPR013155">
    <property type="entry name" value="M/V/L/I-tRNA-synth_anticd-bd"/>
</dbReference>
<dbReference type="InterPro" id="IPR015413">
    <property type="entry name" value="Methionyl/Leucyl_tRNA_Synth"/>
</dbReference>
<dbReference type="InterPro" id="IPR014729">
    <property type="entry name" value="Rossmann-like_a/b/a_fold"/>
</dbReference>
<dbReference type="InterPro" id="IPR009080">
    <property type="entry name" value="tRNAsynth_Ia_anticodon-bd"/>
</dbReference>
<dbReference type="InterPro" id="IPR009008">
    <property type="entry name" value="Val/Leu/Ile-tRNA-synth_edit"/>
</dbReference>
<dbReference type="NCBIfam" id="TIGR00396">
    <property type="entry name" value="leuS_bact"/>
    <property type="match status" value="1"/>
</dbReference>
<dbReference type="PANTHER" id="PTHR43740:SF2">
    <property type="entry name" value="LEUCINE--TRNA LIGASE, MITOCHONDRIAL"/>
    <property type="match status" value="1"/>
</dbReference>
<dbReference type="PANTHER" id="PTHR43740">
    <property type="entry name" value="LEUCYL-TRNA SYNTHETASE"/>
    <property type="match status" value="1"/>
</dbReference>
<dbReference type="Pfam" id="PF08264">
    <property type="entry name" value="Anticodon_1"/>
    <property type="match status" value="1"/>
</dbReference>
<dbReference type="Pfam" id="PF00133">
    <property type="entry name" value="tRNA-synt_1"/>
    <property type="match status" value="1"/>
</dbReference>
<dbReference type="Pfam" id="PF13603">
    <property type="entry name" value="tRNA-synt_1_2"/>
    <property type="match status" value="1"/>
</dbReference>
<dbReference type="Pfam" id="PF09334">
    <property type="entry name" value="tRNA-synt_1g"/>
    <property type="match status" value="1"/>
</dbReference>
<dbReference type="PRINTS" id="PR00985">
    <property type="entry name" value="TRNASYNTHLEU"/>
</dbReference>
<dbReference type="SUPFAM" id="SSF47323">
    <property type="entry name" value="Anticodon-binding domain of a subclass of class I aminoacyl-tRNA synthetases"/>
    <property type="match status" value="1"/>
</dbReference>
<dbReference type="SUPFAM" id="SSF52374">
    <property type="entry name" value="Nucleotidylyl transferase"/>
    <property type="match status" value="1"/>
</dbReference>
<dbReference type="SUPFAM" id="SSF50677">
    <property type="entry name" value="ValRS/IleRS/LeuRS editing domain"/>
    <property type="match status" value="1"/>
</dbReference>
<dbReference type="PROSITE" id="PS00178">
    <property type="entry name" value="AA_TRNA_LIGASE_I"/>
    <property type="match status" value="1"/>
</dbReference>
<evidence type="ECO:0000255" key="1">
    <source>
        <dbReference type="HAMAP-Rule" id="MF_00049"/>
    </source>
</evidence>
<organism>
    <name type="scientific">Ruthia magnifica subsp. Calyptogena magnifica</name>
    <dbReference type="NCBI Taxonomy" id="413404"/>
    <lineage>
        <taxon>Bacteria</taxon>
        <taxon>Pseudomonadati</taxon>
        <taxon>Pseudomonadota</taxon>
        <taxon>Gammaproteobacteria</taxon>
        <taxon>Candidatus Pseudothioglobaceae</taxon>
        <taxon>Candidatus Ruthturnera</taxon>
    </lineage>
</organism>
<comment type="catalytic activity">
    <reaction evidence="1">
        <text>tRNA(Leu) + L-leucine + ATP = L-leucyl-tRNA(Leu) + AMP + diphosphate</text>
        <dbReference type="Rhea" id="RHEA:11688"/>
        <dbReference type="Rhea" id="RHEA-COMP:9613"/>
        <dbReference type="Rhea" id="RHEA-COMP:9622"/>
        <dbReference type="ChEBI" id="CHEBI:30616"/>
        <dbReference type="ChEBI" id="CHEBI:33019"/>
        <dbReference type="ChEBI" id="CHEBI:57427"/>
        <dbReference type="ChEBI" id="CHEBI:78442"/>
        <dbReference type="ChEBI" id="CHEBI:78494"/>
        <dbReference type="ChEBI" id="CHEBI:456215"/>
        <dbReference type="EC" id="6.1.1.4"/>
    </reaction>
</comment>
<comment type="subcellular location">
    <subcellularLocation>
        <location evidence="1">Cytoplasm</location>
    </subcellularLocation>
</comment>
<comment type="similarity">
    <text evidence="1">Belongs to the class-I aminoacyl-tRNA synthetase family.</text>
</comment>
<name>SYL_RUTMC</name>
<keyword id="KW-0030">Aminoacyl-tRNA synthetase</keyword>
<keyword id="KW-0067">ATP-binding</keyword>
<keyword id="KW-0963">Cytoplasm</keyword>
<keyword id="KW-0436">Ligase</keyword>
<keyword id="KW-0547">Nucleotide-binding</keyword>
<keyword id="KW-0648">Protein biosynthesis</keyword>
<gene>
    <name evidence="1" type="primary">leuS</name>
    <name type="ordered locus">Rmag_0005</name>
</gene>
<proteinExistence type="inferred from homology"/>